<gene>
    <name evidence="1" type="primary">atpH</name>
    <name type="ordered locus">RD1_3536</name>
</gene>
<comment type="function">
    <text evidence="1">F(1)F(0) ATP synthase produces ATP from ADP in the presence of a proton or sodium gradient. F-type ATPases consist of two structural domains, F(1) containing the extramembraneous catalytic core and F(0) containing the membrane proton channel, linked together by a central stalk and a peripheral stalk. During catalysis, ATP synthesis in the catalytic domain of F(1) is coupled via a rotary mechanism of the central stalk subunits to proton translocation.</text>
</comment>
<comment type="function">
    <text evidence="1">This protein is part of the stalk that links CF(0) to CF(1). It either transmits conformational changes from CF(0) to CF(1) or is implicated in proton conduction.</text>
</comment>
<comment type="subunit">
    <text evidence="1">F-type ATPases have 2 components, F(1) - the catalytic core - and F(0) - the membrane proton channel. F(1) has five subunits: alpha(3), beta(3), gamma(1), delta(1), epsilon(1). CF(0) has four main subunits: a(1), b(1), b'(1) and c(10-14). The alpha and beta chains form an alternating ring which encloses part of the gamma chain. F(1) is attached to F(0) by a central stalk formed by the gamma and epsilon chains, while a peripheral stalk is formed by the delta, b and b' chains.</text>
</comment>
<comment type="subcellular location">
    <subcellularLocation>
        <location evidence="1">Cell inner membrane</location>
        <topology evidence="1">Peripheral membrane protein</topology>
    </subcellularLocation>
</comment>
<comment type="similarity">
    <text evidence="1">Belongs to the ATPase delta chain family.</text>
</comment>
<reference key="1">
    <citation type="journal article" date="2007" name="J. Bacteriol.">
        <title>The complete genome sequence of Roseobacter denitrificans reveals a mixotrophic rather than photosynthetic metabolism.</title>
        <authorList>
            <person name="Swingley W.D."/>
            <person name="Sadekar S."/>
            <person name="Mastrian S.D."/>
            <person name="Matthies H.J."/>
            <person name="Hao J."/>
            <person name="Ramos H."/>
            <person name="Acharya C.R."/>
            <person name="Conrad A.L."/>
            <person name="Taylor H.L."/>
            <person name="Dejesa L.C."/>
            <person name="Shah M.K."/>
            <person name="O'Huallachain M.E."/>
            <person name="Lince M.T."/>
            <person name="Blankenship R.E."/>
            <person name="Beatty J.T."/>
            <person name="Touchman J.W."/>
        </authorList>
    </citation>
    <scope>NUCLEOTIDE SEQUENCE [LARGE SCALE GENOMIC DNA]</scope>
    <source>
        <strain>ATCC 33942 / OCh 114</strain>
    </source>
</reference>
<accession>Q162S6</accession>
<protein>
    <recommendedName>
        <fullName evidence="1">ATP synthase subunit delta</fullName>
    </recommendedName>
    <alternativeName>
        <fullName evidence="1">ATP synthase F(1) sector subunit delta</fullName>
    </alternativeName>
    <alternativeName>
        <fullName evidence="1">F-type ATPase subunit delta</fullName>
        <shortName evidence="1">F-ATPase subunit delta</shortName>
    </alternativeName>
</protein>
<keyword id="KW-0066">ATP synthesis</keyword>
<keyword id="KW-0997">Cell inner membrane</keyword>
<keyword id="KW-1003">Cell membrane</keyword>
<keyword id="KW-0139">CF(1)</keyword>
<keyword id="KW-0375">Hydrogen ion transport</keyword>
<keyword id="KW-0406">Ion transport</keyword>
<keyword id="KW-0472">Membrane</keyword>
<keyword id="KW-1185">Reference proteome</keyword>
<keyword id="KW-0813">Transport</keyword>
<dbReference type="EMBL" id="CP000362">
    <property type="protein sequence ID" value="ABG33017.1"/>
    <property type="molecule type" value="Genomic_DNA"/>
</dbReference>
<dbReference type="RefSeq" id="WP_011569630.1">
    <property type="nucleotide sequence ID" value="NC_008209.1"/>
</dbReference>
<dbReference type="SMR" id="Q162S6"/>
<dbReference type="STRING" id="375451.RD1_3536"/>
<dbReference type="KEGG" id="rde:RD1_3536"/>
<dbReference type="eggNOG" id="COG0712">
    <property type="taxonomic scope" value="Bacteria"/>
</dbReference>
<dbReference type="HOGENOM" id="CLU_085114_0_1_5"/>
<dbReference type="OrthoDB" id="9796185at2"/>
<dbReference type="Proteomes" id="UP000007029">
    <property type="component" value="Chromosome"/>
</dbReference>
<dbReference type="GO" id="GO:0005886">
    <property type="term" value="C:plasma membrane"/>
    <property type="evidence" value="ECO:0007669"/>
    <property type="project" value="UniProtKB-SubCell"/>
</dbReference>
<dbReference type="GO" id="GO:0045259">
    <property type="term" value="C:proton-transporting ATP synthase complex"/>
    <property type="evidence" value="ECO:0007669"/>
    <property type="project" value="UniProtKB-KW"/>
</dbReference>
<dbReference type="GO" id="GO:0046933">
    <property type="term" value="F:proton-transporting ATP synthase activity, rotational mechanism"/>
    <property type="evidence" value="ECO:0007669"/>
    <property type="project" value="UniProtKB-UniRule"/>
</dbReference>
<dbReference type="Gene3D" id="1.10.520.20">
    <property type="entry name" value="N-terminal domain of the delta subunit of the F1F0-ATP synthase"/>
    <property type="match status" value="1"/>
</dbReference>
<dbReference type="HAMAP" id="MF_01416">
    <property type="entry name" value="ATP_synth_delta_bact"/>
    <property type="match status" value="1"/>
</dbReference>
<dbReference type="InterPro" id="IPR026015">
    <property type="entry name" value="ATP_synth_OSCP/delta_N_sf"/>
</dbReference>
<dbReference type="InterPro" id="IPR020781">
    <property type="entry name" value="ATPase_OSCP/d_CS"/>
</dbReference>
<dbReference type="InterPro" id="IPR000711">
    <property type="entry name" value="ATPase_OSCP/dsu"/>
</dbReference>
<dbReference type="NCBIfam" id="TIGR01145">
    <property type="entry name" value="ATP_synt_delta"/>
    <property type="match status" value="1"/>
</dbReference>
<dbReference type="NCBIfam" id="NF004402">
    <property type="entry name" value="PRK05758.2-2"/>
    <property type="match status" value="1"/>
</dbReference>
<dbReference type="NCBIfam" id="NF004406">
    <property type="entry name" value="PRK05758.3-2"/>
    <property type="match status" value="1"/>
</dbReference>
<dbReference type="PANTHER" id="PTHR11910">
    <property type="entry name" value="ATP SYNTHASE DELTA CHAIN"/>
    <property type="match status" value="1"/>
</dbReference>
<dbReference type="Pfam" id="PF00213">
    <property type="entry name" value="OSCP"/>
    <property type="match status" value="1"/>
</dbReference>
<dbReference type="PRINTS" id="PR00125">
    <property type="entry name" value="ATPASEDELTA"/>
</dbReference>
<dbReference type="SUPFAM" id="SSF47928">
    <property type="entry name" value="N-terminal domain of the delta subunit of the F1F0-ATP synthase"/>
    <property type="match status" value="1"/>
</dbReference>
<dbReference type="PROSITE" id="PS00389">
    <property type="entry name" value="ATPASE_DELTA"/>
    <property type="match status" value="1"/>
</dbReference>
<organism>
    <name type="scientific">Roseobacter denitrificans (strain ATCC 33942 / OCh 114)</name>
    <name type="common">Erythrobacter sp. (strain OCh 114)</name>
    <name type="synonym">Roseobacter denitrificans</name>
    <dbReference type="NCBI Taxonomy" id="375451"/>
    <lineage>
        <taxon>Bacteria</taxon>
        <taxon>Pseudomonadati</taxon>
        <taxon>Pseudomonadota</taxon>
        <taxon>Alphaproteobacteria</taxon>
        <taxon>Rhodobacterales</taxon>
        <taxon>Roseobacteraceae</taxon>
        <taxon>Roseobacter</taxon>
    </lineage>
</organism>
<sequence>MSEPASISTGVAARYATAVYDIAKDSKSVKTLEDDINVLQGALAESADFGALIMSPIYTREEQEAAISALAAKMGLSATMANTLSLMAQKRRLFVVPQLLSTLREIIAEDKGEVTADVVSAKALTKTQADKLAKTLKASTGKTVTLNASVDESLIGGLVVKVGSRMIDTSIRSKLNSLQNAMKEVG</sequence>
<proteinExistence type="inferred from homology"/>
<name>ATPD_ROSDO</name>
<feature type="chain" id="PRO_0000371105" description="ATP synthase subunit delta">
    <location>
        <begin position="1"/>
        <end position="186"/>
    </location>
</feature>
<evidence type="ECO:0000255" key="1">
    <source>
        <dbReference type="HAMAP-Rule" id="MF_01416"/>
    </source>
</evidence>